<feature type="chain" id="PRO_1000129467" description="Nicotinate phosphoribosyltransferase">
    <location>
        <begin position="1"/>
        <end position="400"/>
    </location>
</feature>
<feature type="modified residue" description="Phosphohistidine; by autocatalysis" evidence="1">
    <location>
        <position position="220"/>
    </location>
</feature>
<keyword id="KW-0436">Ligase</keyword>
<keyword id="KW-0597">Phosphoprotein</keyword>
<keyword id="KW-0662">Pyridine nucleotide biosynthesis</keyword>
<accession>B7NM43</accession>
<sequence>MTQFASPVLHSLLDTDAYKLHMQQAVFHHYYDVHVAAEFRCRGDDLLGIYADAIREQVQAMQHLRLQDDEYQWLSALPFFQADYLNWLREFRFNPEQVTVSNDNGKLDIRLSGPWREVILWEVPLLAVISEMVHRYRSPQTDVAQALDTLESKLVDFSALTAGLDMSRFHLMDFGTRRRFSREVQETIVKRLQQESWFVGTSNYDLARRLSLTPMGTQAHEWFQAHQQISPDLANSQRAALAAWLEEYPDQLGIALTDCITMDAFLRDFGVEFASRYQGLRHDSGDPVEWGEKAIAHYEKLGIDPQSKTLVFSDNLDLRKAVELYRHFSSRVQLSFGIGTRLTCDIPQVKPLNIVIKLVECNGKPVAKLSDSPGKTICHDKAFVRALRKAFDLPHIKKAS</sequence>
<gene>
    <name evidence="1" type="primary">pncB</name>
    <name type="ordered locus">ECIAI39_2216</name>
</gene>
<comment type="function">
    <text evidence="1">Catalyzes the synthesis of beta-nicotinate D-ribonucleotide from nicotinate and 5-phospho-D-ribose 1-phosphate at the expense of ATP.</text>
</comment>
<comment type="catalytic activity">
    <reaction evidence="1">
        <text>nicotinate + 5-phospho-alpha-D-ribose 1-diphosphate + ATP + H2O = nicotinate beta-D-ribonucleotide + ADP + phosphate + diphosphate</text>
        <dbReference type="Rhea" id="RHEA:36163"/>
        <dbReference type="ChEBI" id="CHEBI:15377"/>
        <dbReference type="ChEBI" id="CHEBI:30616"/>
        <dbReference type="ChEBI" id="CHEBI:32544"/>
        <dbReference type="ChEBI" id="CHEBI:33019"/>
        <dbReference type="ChEBI" id="CHEBI:43474"/>
        <dbReference type="ChEBI" id="CHEBI:57502"/>
        <dbReference type="ChEBI" id="CHEBI:58017"/>
        <dbReference type="ChEBI" id="CHEBI:456216"/>
        <dbReference type="EC" id="6.3.4.21"/>
    </reaction>
</comment>
<comment type="pathway">
    <text evidence="1">Cofactor biosynthesis; NAD(+) biosynthesis; nicotinate D-ribonucleotide from nicotinate: step 1/1.</text>
</comment>
<comment type="PTM">
    <text evidence="1">Transiently phosphorylated on a His residue during the reaction cycle. Phosphorylation strongly increases the affinity for substrates and increases the rate of nicotinate D-ribonucleotide production. Dephosphorylation regenerates the low-affinity form of the enzyme, leading to product release.</text>
</comment>
<comment type="similarity">
    <text evidence="1">Belongs to the NAPRTase family.</text>
</comment>
<proteinExistence type="inferred from homology"/>
<organism>
    <name type="scientific">Escherichia coli O7:K1 (strain IAI39 / ExPEC)</name>
    <dbReference type="NCBI Taxonomy" id="585057"/>
    <lineage>
        <taxon>Bacteria</taxon>
        <taxon>Pseudomonadati</taxon>
        <taxon>Pseudomonadota</taxon>
        <taxon>Gammaproteobacteria</taxon>
        <taxon>Enterobacterales</taxon>
        <taxon>Enterobacteriaceae</taxon>
        <taxon>Escherichia</taxon>
    </lineage>
</organism>
<dbReference type="EC" id="6.3.4.21" evidence="1"/>
<dbReference type="EMBL" id="CU928164">
    <property type="protein sequence ID" value="CAR18343.1"/>
    <property type="molecule type" value="Genomic_DNA"/>
</dbReference>
<dbReference type="RefSeq" id="WP_001330062.1">
    <property type="nucleotide sequence ID" value="NC_011750.1"/>
</dbReference>
<dbReference type="RefSeq" id="YP_002408179.1">
    <property type="nucleotide sequence ID" value="NC_011750.1"/>
</dbReference>
<dbReference type="SMR" id="B7NM43"/>
<dbReference type="STRING" id="585057.ECIAI39_2216"/>
<dbReference type="KEGG" id="ect:ECIAI39_2216"/>
<dbReference type="PATRIC" id="fig|585057.6.peg.2308"/>
<dbReference type="HOGENOM" id="CLU_030991_1_0_6"/>
<dbReference type="UniPathway" id="UPA00253">
    <property type="reaction ID" value="UER00457"/>
</dbReference>
<dbReference type="Proteomes" id="UP000000749">
    <property type="component" value="Chromosome"/>
</dbReference>
<dbReference type="GO" id="GO:0005829">
    <property type="term" value="C:cytosol"/>
    <property type="evidence" value="ECO:0007669"/>
    <property type="project" value="TreeGrafter"/>
</dbReference>
<dbReference type="GO" id="GO:0004516">
    <property type="term" value="F:nicotinate phosphoribosyltransferase activity"/>
    <property type="evidence" value="ECO:0007669"/>
    <property type="project" value="UniProtKB-UniRule"/>
</dbReference>
<dbReference type="GO" id="GO:0034355">
    <property type="term" value="P:NAD biosynthetic process via the salvage pathway"/>
    <property type="evidence" value="ECO:0007669"/>
    <property type="project" value="TreeGrafter"/>
</dbReference>
<dbReference type="CDD" id="cd01401">
    <property type="entry name" value="PncB_like"/>
    <property type="match status" value="1"/>
</dbReference>
<dbReference type="FunFam" id="3.20.140.10:FF:000001">
    <property type="entry name" value="Nicotinate phosphoribosyltransferase"/>
    <property type="match status" value="1"/>
</dbReference>
<dbReference type="Gene3D" id="3.20.140.10">
    <property type="entry name" value="nicotinate phosphoribosyltransferase"/>
    <property type="match status" value="1"/>
</dbReference>
<dbReference type="HAMAP" id="MF_00570">
    <property type="entry name" value="NAPRTase"/>
    <property type="match status" value="1"/>
</dbReference>
<dbReference type="InterPro" id="IPR041525">
    <property type="entry name" value="N/Namide_PRibTrfase"/>
</dbReference>
<dbReference type="InterPro" id="IPR040727">
    <property type="entry name" value="NAPRTase_N"/>
</dbReference>
<dbReference type="InterPro" id="IPR006406">
    <property type="entry name" value="Nic_PRibTrfase"/>
</dbReference>
<dbReference type="InterPro" id="IPR007229">
    <property type="entry name" value="Nic_PRibTrfase-Fam"/>
</dbReference>
<dbReference type="InterPro" id="IPR036068">
    <property type="entry name" value="Nicotinate_pribotase-like_C"/>
</dbReference>
<dbReference type="NCBIfam" id="TIGR01514">
    <property type="entry name" value="NAPRTase"/>
    <property type="match status" value="1"/>
</dbReference>
<dbReference type="NCBIfam" id="NF003704">
    <property type="entry name" value="PRK05321.1"/>
    <property type="match status" value="1"/>
</dbReference>
<dbReference type="PANTHER" id="PTHR11098">
    <property type="entry name" value="NICOTINATE PHOSPHORIBOSYLTRANSFERASE"/>
    <property type="match status" value="1"/>
</dbReference>
<dbReference type="PANTHER" id="PTHR11098:SF1">
    <property type="entry name" value="NICOTINATE PHOSPHORIBOSYLTRANSFERASE"/>
    <property type="match status" value="1"/>
</dbReference>
<dbReference type="Pfam" id="PF04095">
    <property type="entry name" value="NAPRTase"/>
    <property type="match status" value="1"/>
</dbReference>
<dbReference type="Pfam" id="PF17767">
    <property type="entry name" value="NAPRTase_N"/>
    <property type="match status" value="1"/>
</dbReference>
<dbReference type="PIRSF" id="PIRSF000484">
    <property type="entry name" value="NAPRT"/>
    <property type="match status" value="1"/>
</dbReference>
<dbReference type="SUPFAM" id="SSF51690">
    <property type="entry name" value="Nicotinate/Quinolinate PRTase C-terminal domain-like"/>
    <property type="match status" value="1"/>
</dbReference>
<dbReference type="SUPFAM" id="SSF54675">
    <property type="entry name" value="Nicotinate/Quinolinate PRTase N-terminal domain-like"/>
    <property type="match status" value="1"/>
</dbReference>
<protein>
    <recommendedName>
        <fullName evidence="1">Nicotinate phosphoribosyltransferase</fullName>
        <shortName evidence="1">NAPRTase</shortName>
        <ecNumber evidence="1">6.3.4.21</ecNumber>
    </recommendedName>
</protein>
<evidence type="ECO:0000255" key="1">
    <source>
        <dbReference type="HAMAP-Rule" id="MF_00570"/>
    </source>
</evidence>
<name>PNCB_ECO7I</name>
<reference key="1">
    <citation type="journal article" date="2009" name="PLoS Genet.">
        <title>Organised genome dynamics in the Escherichia coli species results in highly diverse adaptive paths.</title>
        <authorList>
            <person name="Touchon M."/>
            <person name="Hoede C."/>
            <person name="Tenaillon O."/>
            <person name="Barbe V."/>
            <person name="Baeriswyl S."/>
            <person name="Bidet P."/>
            <person name="Bingen E."/>
            <person name="Bonacorsi S."/>
            <person name="Bouchier C."/>
            <person name="Bouvet O."/>
            <person name="Calteau A."/>
            <person name="Chiapello H."/>
            <person name="Clermont O."/>
            <person name="Cruveiller S."/>
            <person name="Danchin A."/>
            <person name="Diard M."/>
            <person name="Dossat C."/>
            <person name="Karoui M.E."/>
            <person name="Frapy E."/>
            <person name="Garry L."/>
            <person name="Ghigo J.M."/>
            <person name="Gilles A.M."/>
            <person name="Johnson J."/>
            <person name="Le Bouguenec C."/>
            <person name="Lescat M."/>
            <person name="Mangenot S."/>
            <person name="Martinez-Jehanne V."/>
            <person name="Matic I."/>
            <person name="Nassif X."/>
            <person name="Oztas S."/>
            <person name="Petit M.A."/>
            <person name="Pichon C."/>
            <person name="Rouy Z."/>
            <person name="Ruf C.S."/>
            <person name="Schneider D."/>
            <person name="Tourret J."/>
            <person name="Vacherie B."/>
            <person name="Vallenet D."/>
            <person name="Medigue C."/>
            <person name="Rocha E.P.C."/>
            <person name="Denamur E."/>
        </authorList>
    </citation>
    <scope>NUCLEOTIDE SEQUENCE [LARGE SCALE GENOMIC DNA]</scope>
    <source>
        <strain>IAI39 / ExPEC</strain>
    </source>
</reference>